<keyword id="KW-0687">Ribonucleoprotein</keyword>
<keyword id="KW-0689">Ribosomal protein</keyword>
<keyword id="KW-0694">RNA-binding</keyword>
<keyword id="KW-0699">rRNA-binding</keyword>
<reference key="1">
    <citation type="journal article" date="2002" name="Proc. Natl. Acad. Sci. U.S.A.">
        <title>Genome sequence and comparative microarray analysis of serotype M18 group A Streptococcus strains associated with acute rheumatic fever outbreaks.</title>
        <authorList>
            <person name="Smoot J.C."/>
            <person name="Barbian K.D."/>
            <person name="Van Gompel J.J."/>
            <person name="Smoot L.M."/>
            <person name="Chaussee M.S."/>
            <person name="Sylva G.L."/>
            <person name="Sturdevant D.E."/>
            <person name="Ricklefs S.M."/>
            <person name="Porcella S.F."/>
            <person name="Parkins L.D."/>
            <person name="Beres S.B."/>
            <person name="Campbell D.S."/>
            <person name="Smith T.M."/>
            <person name="Zhang Q."/>
            <person name="Kapur V."/>
            <person name="Daly J.A."/>
            <person name="Veasy L.G."/>
            <person name="Musser J.M."/>
        </authorList>
    </citation>
    <scope>NUCLEOTIDE SEQUENCE [LARGE SCALE GENOMIC DNA]</scope>
    <source>
        <strain>MGAS8232</strain>
    </source>
</reference>
<gene>
    <name evidence="1" type="primary">rplX</name>
    <name type="ordered locus">spyM18_0063</name>
</gene>
<dbReference type="EMBL" id="AE009949">
    <property type="protein sequence ID" value="AAL96887.1"/>
    <property type="molecule type" value="Genomic_DNA"/>
</dbReference>
<dbReference type="RefSeq" id="WP_002986636.1">
    <property type="nucleotide sequence ID" value="NC_003485.1"/>
</dbReference>
<dbReference type="SMR" id="P60738"/>
<dbReference type="GeneID" id="69900037"/>
<dbReference type="KEGG" id="spm:spyM18_0063"/>
<dbReference type="HOGENOM" id="CLU_093315_2_0_9"/>
<dbReference type="GO" id="GO:1990904">
    <property type="term" value="C:ribonucleoprotein complex"/>
    <property type="evidence" value="ECO:0007669"/>
    <property type="project" value="UniProtKB-KW"/>
</dbReference>
<dbReference type="GO" id="GO:0005840">
    <property type="term" value="C:ribosome"/>
    <property type="evidence" value="ECO:0007669"/>
    <property type="project" value="UniProtKB-KW"/>
</dbReference>
<dbReference type="GO" id="GO:0019843">
    <property type="term" value="F:rRNA binding"/>
    <property type="evidence" value="ECO:0007669"/>
    <property type="project" value="UniProtKB-UniRule"/>
</dbReference>
<dbReference type="GO" id="GO:0003735">
    <property type="term" value="F:structural constituent of ribosome"/>
    <property type="evidence" value="ECO:0007669"/>
    <property type="project" value="InterPro"/>
</dbReference>
<dbReference type="GO" id="GO:0006412">
    <property type="term" value="P:translation"/>
    <property type="evidence" value="ECO:0007669"/>
    <property type="project" value="UniProtKB-UniRule"/>
</dbReference>
<dbReference type="CDD" id="cd06089">
    <property type="entry name" value="KOW_RPL26"/>
    <property type="match status" value="1"/>
</dbReference>
<dbReference type="FunFam" id="2.30.30.30:FF:000004">
    <property type="entry name" value="50S ribosomal protein L24"/>
    <property type="match status" value="1"/>
</dbReference>
<dbReference type="Gene3D" id="2.30.30.30">
    <property type="match status" value="1"/>
</dbReference>
<dbReference type="HAMAP" id="MF_01326_B">
    <property type="entry name" value="Ribosomal_uL24_B"/>
    <property type="match status" value="1"/>
</dbReference>
<dbReference type="InterPro" id="IPR005824">
    <property type="entry name" value="KOW"/>
</dbReference>
<dbReference type="InterPro" id="IPR014722">
    <property type="entry name" value="Rib_uL2_dom2"/>
</dbReference>
<dbReference type="InterPro" id="IPR003256">
    <property type="entry name" value="Ribosomal_uL24"/>
</dbReference>
<dbReference type="InterPro" id="IPR005825">
    <property type="entry name" value="Ribosomal_uL24_CS"/>
</dbReference>
<dbReference type="InterPro" id="IPR041988">
    <property type="entry name" value="Ribosomal_uL24_KOW"/>
</dbReference>
<dbReference type="InterPro" id="IPR008991">
    <property type="entry name" value="Translation_prot_SH3-like_sf"/>
</dbReference>
<dbReference type="NCBIfam" id="TIGR01079">
    <property type="entry name" value="rplX_bact"/>
    <property type="match status" value="1"/>
</dbReference>
<dbReference type="PANTHER" id="PTHR12903">
    <property type="entry name" value="MITOCHONDRIAL RIBOSOMAL PROTEIN L24"/>
    <property type="match status" value="1"/>
</dbReference>
<dbReference type="Pfam" id="PF00467">
    <property type="entry name" value="KOW"/>
    <property type="match status" value="1"/>
</dbReference>
<dbReference type="Pfam" id="PF17136">
    <property type="entry name" value="ribosomal_L24"/>
    <property type="match status" value="1"/>
</dbReference>
<dbReference type="SMART" id="SM00739">
    <property type="entry name" value="KOW"/>
    <property type="match status" value="1"/>
</dbReference>
<dbReference type="SUPFAM" id="SSF50104">
    <property type="entry name" value="Translation proteins SH3-like domain"/>
    <property type="match status" value="1"/>
</dbReference>
<dbReference type="PROSITE" id="PS01108">
    <property type="entry name" value="RIBOSOMAL_L24"/>
    <property type="match status" value="1"/>
</dbReference>
<accession>P60738</accession>
<accession>Q8P2Z5</accession>
<protein>
    <recommendedName>
        <fullName evidence="1">Large ribosomal subunit protein uL24</fullName>
    </recommendedName>
    <alternativeName>
        <fullName evidence="2">50S ribosomal protein L24</fullName>
    </alternativeName>
</protein>
<feature type="chain" id="PRO_0000130734" description="Large ribosomal subunit protein uL24">
    <location>
        <begin position="1"/>
        <end position="101"/>
    </location>
</feature>
<proteinExistence type="inferred from homology"/>
<comment type="function">
    <text evidence="1">One of two assembly initiator proteins, it binds directly to the 5'-end of the 23S rRNA, where it nucleates assembly of the 50S subunit.</text>
</comment>
<comment type="function">
    <text evidence="1">One of the proteins that surrounds the polypeptide exit tunnel on the outside of the subunit.</text>
</comment>
<comment type="subunit">
    <text evidence="1">Part of the 50S ribosomal subunit.</text>
</comment>
<comment type="similarity">
    <text evidence="1">Belongs to the universal ribosomal protein uL24 family.</text>
</comment>
<evidence type="ECO:0000255" key="1">
    <source>
        <dbReference type="HAMAP-Rule" id="MF_01326"/>
    </source>
</evidence>
<evidence type="ECO:0000305" key="2"/>
<name>RL24_STRP8</name>
<sequence length="101" mass="10917">MFVKKGDKVRVIAGKDKGTEAVVLKALPKVNKVIVEGVGMIKKHQKPNTENPQGAIVEKEAPIHVSNVQVLDKNGVAGRVGYKVVDGKKVRYSKKSGEVLD</sequence>
<organism>
    <name type="scientific">Streptococcus pyogenes serotype M18 (strain MGAS8232)</name>
    <dbReference type="NCBI Taxonomy" id="186103"/>
    <lineage>
        <taxon>Bacteria</taxon>
        <taxon>Bacillati</taxon>
        <taxon>Bacillota</taxon>
        <taxon>Bacilli</taxon>
        <taxon>Lactobacillales</taxon>
        <taxon>Streptococcaceae</taxon>
        <taxon>Streptococcus</taxon>
    </lineage>
</organism>